<keyword id="KW-0878">Amphibian defense peptide</keyword>
<keyword id="KW-0044">Antibiotic</keyword>
<keyword id="KW-0929">Antimicrobial</keyword>
<keyword id="KW-0903">Direct protein sequencing</keyword>
<keyword id="KW-1015">Disulfide bond</keyword>
<keyword id="KW-0395">Inflammatory response</keyword>
<keyword id="KW-0467">Mast cell degranulation</keyword>
<keyword id="KW-0964">Secreted</keyword>
<organism>
    <name type="scientific">Lithobates sevosus</name>
    <name type="common">Dusky gopher frog</name>
    <name type="synonym">Rana sevosa</name>
    <dbReference type="NCBI Taxonomy" id="299683"/>
    <lineage>
        <taxon>Eukaryota</taxon>
        <taxon>Metazoa</taxon>
        <taxon>Chordata</taxon>
        <taxon>Craniata</taxon>
        <taxon>Vertebrata</taxon>
        <taxon>Euteleostomi</taxon>
        <taxon>Amphibia</taxon>
        <taxon>Batrachia</taxon>
        <taxon>Anura</taxon>
        <taxon>Neobatrachia</taxon>
        <taxon>Ranoidea</taxon>
        <taxon>Ranidae</taxon>
        <taxon>Lithobates</taxon>
    </lineage>
</organism>
<proteinExistence type="evidence at protein level"/>
<accession>P85057</accession>
<protein>
    <recommendedName>
        <fullName evidence="4">Ranatuerin-2SEa</fullName>
    </recommendedName>
</protein>
<name>RN2A_LITSE</name>
<feature type="peptide" id="PRO_0000271259" description="Ranatuerin-2SEa">
    <location>
        <begin position="1"/>
        <end position="29"/>
    </location>
</feature>
<feature type="disulfide bond" evidence="1">
    <location>
        <begin position="23"/>
        <end position="29"/>
    </location>
</feature>
<comment type="function">
    <text evidence="3">Mast cell degranulating peptide. Causes histamine release from rat peritoneal mast cells in vitro. Has antibacterial activity against the Gram-negative bacterium E.coli K12 and Gram-positive bacterium M.luteus NCT C2665.</text>
</comment>
<comment type="subcellular location">
    <subcellularLocation>
        <location evidence="3">Secreted</location>
    </subcellularLocation>
</comment>
<comment type="tissue specificity">
    <text evidence="3">Expressed by the skin glands.</text>
</comment>
<comment type="mass spectrometry"/>
<comment type="mass spectrometry"/>
<comment type="similarity">
    <text evidence="2">Belongs to the frog skin active peptide (FSAP) family. Ranatuerin subfamily.</text>
</comment>
<reference evidence="5" key="1">
    <citation type="journal article" date="2006" name="Peptides">
        <title>Histamine-releasing and antimicrobial peptides from the skin secretions of the dusky gopher frog, Rana sevosa.</title>
        <authorList>
            <person name="Graham C."/>
            <person name="Richter S.C."/>
            <person name="McClean S."/>
            <person name="O'Kane E."/>
            <person name="Flatt P.R."/>
            <person name="Shaw C."/>
        </authorList>
    </citation>
    <scope>PROTEIN SEQUENCE</scope>
    <scope>FUNCTION</scope>
    <scope>SUBCELLULAR LOCATION</scope>
    <scope>TISSUE SPECIFICITY</scope>
    <scope>MASS SPECTROMETRY</scope>
    <source>
        <tissue evidence="3">Skin secretion</tissue>
    </source>
</reference>
<sequence>GFISTVKNLATNVAGTVIDTIKCKVTGGC</sequence>
<evidence type="ECO:0000250" key="1">
    <source>
        <dbReference type="UniProtKB" id="P40840"/>
    </source>
</evidence>
<evidence type="ECO:0000255" key="2"/>
<evidence type="ECO:0000269" key="3">
    <source>
    </source>
</evidence>
<evidence type="ECO:0000303" key="4">
    <source>
    </source>
</evidence>
<evidence type="ECO:0000305" key="5"/>
<dbReference type="SMR" id="P85057"/>
<dbReference type="GO" id="GO:0005576">
    <property type="term" value="C:extracellular region"/>
    <property type="evidence" value="ECO:0000314"/>
    <property type="project" value="UniProtKB"/>
</dbReference>
<dbReference type="GO" id="GO:0050829">
    <property type="term" value="P:defense response to Gram-negative bacterium"/>
    <property type="evidence" value="ECO:0000314"/>
    <property type="project" value="UniProtKB"/>
</dbReference>
<dbReference type="GO" id="GO:0050830">
    <property type="term" value="P:defense response to Gram-positive bacterium"/>
    <property type="evidence" value="ECO:0000314"/>
    <property type="project" value="UniProtKB"/>
</dbReference>
<dbReference type="GO" id="GO:0002553">
    <property type="term" value="P:histamine secretion by mast cell"/>
    <property type="evidence" value="ECO:0000314"/>
    <property type="project" value="UniProtKB"/>
</dbReference>
<dbReference type="GO" id="GO:0043306">
    <property type="term" value="P:positive regulation of mast cell degranulation"/>
    <property type="evidence" value="ECO:0000314"/>
    <property type="project" value="UniProtKB"/>
</dbReference>
<dbReference type="InterPro" id="IPR012521">
    <property type="entry name" value="Antimicrobial_frog_2"/>
</dbReference>
<dbReference type="Pfam" id="PF08023">
    <property type="entry name" value="Antimicrobial_2"/>
    <property type="match status" value="1"/>
</dbReference>